<organism>
    <name type="scientific">Roseobacter denitrificans (strain ATCC 33942 / OCh 114)</name>
    <name type="common">Erythrobacter sp. (strain OCh 114)</name>
    <name type="synonym">Roseobacter denitrificans</name>
    <dbReference type="NCBI Taxonomy" id="375451"/>
    <lineage>
        <taxon>Bacteria</taxon>
        <taxon>Pseudomonadati</taxon>
        <taxon>Pseudomonadota</taxon>
        <taxon>Alphaproteobacteria</taxon>
        <taxon>Rhodobacterales</taxon>
        <taxon>Roseobacteraceae</taxon>
        <taxon>Roseobacter</taxon>
    </lineage>
</organism>
<protein>
    <recommendedName>
        <fullName evidence="1">2-C-methyl-D-erythritol 4-phosphate cytidylyltransferase</fullName>
        <ecNumber evidence="1">2.7.7.60</ecNumber>
    </recommendedName>
    <alternativeName>
        <fullName evidence="1">4-diphosphocytidyl-2C-methyl-D-erythritol synthase</fullName>
    </alternativeName>
    <alternativeName>
        <fullName evidence="1">MEP cytidylyltransferase</fullName>
        <shortName evidence="1">MCT</shortName>
    </alternativeName>
</protein>
<reference key="1">
    <citation type="journal article" date="2007" name="J. Bacteriol.">
        <title>The complete genome sequence of Roseobacter denitrificans reveals a mixotrophic rather than photosynthetic metabolism.</title>
        <authorList>
            <person name="Swingley W.D."/>
            <person name="Sadekar S."/>
            <person name="Mastrian S.D."/>
            <person name="Matthies H.J."/>
            <person name="Hao J."/>
            <person name="Ramos H."/>
            <person name="Acharya C.R."/>
            <person name="Conrad A.L."/>
            <person name="Taylor H.L."/>
            <person name="Dejesa L.C."/>
            <person name="Shah M.K."/>
            <person name="O'Huallachain M.E."/>
            <person name="Lince M.T."/>
            <person name="Blankenship R.E."/>
            <person name="Beatty J.T."/>
            <person name="Touchman J.W."/>
        </authorList>
    </citation>
    <scope>NUCLEOTIDE SEQUENCE [LARGE SCALE GENOMIC DNA]</scope>
    <source>
        <strain>ATCC 33942 / OCh 114</strain>
    </source>
</reference>
<proteinExistence type="inferred from homology"/>
<name>ISPD_ROSDO</name>
<comment type="function">
    <text evidence="1">Catalyzes the formation of 4-diphosphocytidyl-2-C-methyl-D-erythritol from CTP and 2-C-methyl-D-erythritol 4-phosphate (MEP).</text>
</comment>
<comment type="catalytic activity">
    <reaction evidence="1">
        <text>2-C-methyl-D-erythritol 4-phosphate + CTP + H(+) = 4-CDP-2-C-methyl-D-erythritol + diphosphate</text>
        <dbReference type="Rhea" id="RHEA:13429"/>
        <dbReference type="ChEBI" id="CHEBI:15378"/>
        <dbReference type="ChEBI" id="CHEBI:33019"/>
        <dbReference type="ChEBI" id="CHEBI:37563"/>
        <dbReference type="ChEBI" id="CHEBI:57823"/>
        <dbReference type="ChEBI" id="CHEBI:58262"/>
        <dbReference type="EC" id="2.7.7.60"/>
    </reaction>
</comment>
<comment type="pathway">
    <text evidence="1">Isoprenoid biosynthesis; isopentenyl diphosphate biosynthesis via DXP pathway; isopentenyl diphosphate from 1-deoxy-D-xylulose 5-phosphate: step 2/6.</text>
</comment>
<comment type="similarity">
    <text evidence="1">Belongs to the IspD/TarI cytidylyltransferase family. IspD subfamily.</text>
</comment>
<accession>Q165P6</accession>
<evidence type="ECO:0000255" key="1">
    <source>
        <dbReference type="HAMAP-Rule" id="MF_00108"/>
    </source>
</evidence>
<feature type="chain" id="PRO_1000022945" description="2-C-methyl-D-erythritol 4-phosphate cytidylyltransferase">
    <location>
        <begin position="1"/>
        <end position="221"/>
    </location>
</feature>
<feature type="site" description="Transition state stabilizer" evidence="1">
    <location>
        <position position="15"/>
    </location>
</feature>
<feature type="site" description="Transition state stabilizer" evidence="1">
    <location>
        <position position="22"/>
    </location>
</feature>
<feature type="site" description="Positions MEP for the nucleophilic attack" evidence="1">
    <location>
        <position position="148"/>
    </location>
</feature>
<feature type="site" description="Positions MEP for the nucleophilic attack" evidence="1">
    <location>
        <position position="201"/>
    </location>
</feature>
<gene>
    <name evidence="1" type="primary">ispD</name>
    <name type="ordered locus">RD1_2766</name>
</gene>
<keyword id="KW-0414">Isoprene biosynthesis</keyword>
<keyword id="KW-0548">Nucleotidyltransferase</keyword>
<keyword id="KW-1185">Reference proteome</keyword>
<keyword id="KW-0808">Transferase</keyword>
<dbReference type="EC" id="2.7.7.60" evidence="1"/>
<dbReference type="EMBL" id="CP000362">
    <property type="protein sequence ID" value="ABG32297.1"/>
    <property type="molecule type" value="Genomic_DNA"/>
</dbReference>
<dbReference type="RefSeq" id="WP_011568913.1">
    <property type="nucleotide sequence ID" value="NC_008209.1"/>
</dbReference>
<dbReference type="SMR" id="Q165P6"/>
<dbReference type="STRING" id="375451.RD1_2766"/>
<dbReference type="KEGG" id="rde:RD1_2766"/>
<dbReference type="eggNOG" id="COG1211">
    <property type="taxonomic scope" value="Bacteria"/>
</dbReference>
<dbReference type="HOGENOM" id="CLU_061281_2_2_5"/>
<dbReference type="OrthoDB" id="9804336at2"/>
<dbReference type="UniPathway" id="UPA00056">
    <property type="reaction ID" value="UER00093"/>
</dbReference>
<dbReference type="Proteomes" id="UP000007029">
    <property type="component" value="Chromosome"/>
</dbReference>
<dbReference type="GO" id="GO:0050518">
    <property type="term" value="F:2-C-methyl-D-erythritol 4-phosphate cytidylyltransferase activity"/>
    <property type="evidence" value="ECO:0007669"/>
    <property type="project" value="UniProtKB-UniRule"/>
</dbReference>
<dbReference type="GO" id="GO:0019288">
    <property type="term" value="P:isopentenyl diphosphate biosynthetic process, methylerythritol 4-phosphate pathway"/>
    <property type="evidence" value="ECO:0007669"/>
    <property type="project" value="UniProtKB-UniRule"/>
</dbReference>
<dbReference type="FunFam" id="3.90.550.10:FF:000003">
    <property type="entry name" value="2-C-methyl-D-erythritol 4-phosphate cytidylyltransferase"/>
    <property type="match status" value="1"/>
</dbReference>
<dbReference type="Gene3D" id="3.90.550.10">
    <property type="entry name" value="Spore Coat Polysaccharide Biosynthesis Protein SpsA, Chain A"/>
    <property type="match status" value="1"/>
</dbReference>
<dbReference type="HAMAP" id="MF_00108">
    <property type="entry name" value="IspD"/>
    <property type="match status" value="1"/>
</dbReference>
<dbReference type="InterPro" id="IPR001228">
    <property type="entry name" value="IspD"/>
</dbReference>
<dbReference type="InterPro" id="IPR034683">
    <property type="entry name" value="IspD/TarI"/>
</dbReference>
<dbReference type="InterPro" id="IPR050088">
    <property type="entry name" value="IspD/TarI_cytidylyltransf_bact"/>
</dbReference>
<dbReference type="InterPro" id="IPR018294">
    <property type="entry name" value="ISPD_synthase_CS"/>
</dbReference>
<dbReference type="InterPro" id="IPR029044">
    <property type="entry name" value="Nucleotide-diphossugar_trans"/>
</dbReference>
<dbReference type="NCBIfam" id="TIGR00453">
    <property type="entry name" value="ispD"/>
    <property type="match status" value="1"/>
</dbReference>
<dbReference type="PANTHER" id="PTHR32125">
    <property type="entry name" value="2-C-METHYL-D-ERYTHRITOL 4-PHOSPHATE CYTIDYLYLTRANSFERASE, CHLOROPLASTIC"/>
    <property type="match status" value="1"/>
</dbReference>
<dbReference type="PANTHER" id="PTHR32125:SF4">
    <property type="entry name" value="2-C-METHYL-D-ERYTHRITOL 4-PHOSPHATE CYTIDYLYLTRANSFERASE, CHLOROPLASTIC"/>
    <property type="match status" value="1"/>
</dbReference>
<dbReference type="Pfam" id="PF01128">
    <property type="entry name" value="IspD"/>
    <property type="match status" value="1"/>
</dbReference>
<dbReference type="SUPFAM" id="SSF53448">
    <property type="entry name" value="Nucleotide-diphospho-sugar transferases"/>
    <property type="match status" value="1"/>
</dbReference>
<dbReference type="PROSITE" id="PS01295">
    <property type="entry name" value="ISPD"/>
    <property type="match status" value="1"/>
</dbReference>
<sequence length="221" mass="23173">MKVGAVIVAAGRGVRAGGGIPKQWRALHKGTVAQASIRAFTGHADIRDVVLVLHPDDIDTDLWPREPGLIVASGGASRSASVLAGLRMLNGKTDAVLIHDAARPCVTTRVIDDVISALRTAQAAAPAVAVVDALWTGENGQVTGTADRTGLYRAQTPQGFHLDAIIKAHRQFPEGAADDVEVARRAGLDVVIVPGDEDNLKITLPGDFARAEAILRARDGH</sequence>